<accession>A0KPF9</accession>
<feature type="chain" id="PRO_1000023356" description="Translational regulator CsrA">
    <location>
        <begin position="1"/>
        <end position="62"/>
    </location>
</feature>
<reference key="1">
    <citation type="journal article" date="2006" name="J. Bacteriol.">
        <title>Genome sequence of Aeromonas hydrophila ATCC 7966T: jack of all trades.</title>
        <authorList>
            <person name="Seshadri R."/>
            <person name="Joseph S.W."/>
            <person name="Chopra A.K."/>
            <person name="Sha J."/>
            <person name="Shaw J."/>
            <person name="Graf J."/>
            <person name="Haft D.H."/>
            <person name="Wu M."/>
            <person name="Ren Q."/>
            <person name="Rosovitz M.J."/>
            <person name="Madupu R."/>
            <person name="Tallon L."/>
            <person name="Kim M."/>
            <person name="Jin S."/>
            <person name="Vuong H."/>
            <person name="Stine O.C."/>
            <person name="Ali A."/>
            <person name="Horneman A.J."/>
            <person name="Heidelberg J.F."/>
        </authorList>
    </citation>
    <scope>NUCLEOTIDE SEQUENCE [LARGE SCALE GENOMIC DNA]</scope>
    <source>
        <strain>ATCC 7966 / DSM 30187 / BCRC 13018 / CCUG 14551 / JCM 1027 / KCTC 2358 / NCIMB 9240 / NCTC 8049</strain>
    </source>
</reference>
<comment type="function">
    <text evidence="1">A key translational regulator that binds mRNA to regulate translation initiation and/or mRNA stability. Mediates global changes in gene expression, shifting from rapid growth to stress survival by linking envelope stress, the stringent response and the catabolite repression systems. Usually binds in the 5'-UTR; binding at or near the Shine-Dalgarno sequence prevents ribosome-binding, repressing translation, binding elsewhere in the 5'-UTR can activate translation and/or stabilize the mRNA. Its function is antagonized by small RNA(s).</text>
</comment>
<comment type="subunit">
    <text evidence="1">Homodimer; the beta-strands of each monomer intercalate to form a hydrophobic core, while the alpha-helices form wings that extend away from the core.</text>
</comment>
<comment type="subcellular location">
    <subcellularLocation>
        <location evidence="1">Cytoplasm</location>
    </subcellularLocation>
</comment>
<comment type="similarity">
    <text evidence="1">Belongs to the CsrA/RsmA family.</text>
</comment>
<proteinExistence type="inferred from homology"/>
<protein>
    <recommendedName>
        <fullName evidence="1">Translational regulator CsrA</fullName>
    </recommendedName>
    <alternativeName>
        <fullName evidence="1">Carbon storage regulator</fullName>
    </alternativeName>
</protein>
<sequence>MLILTRRVGETLMIGDEVTVTVLGVKGNQVRIGVNAPKEVSVHREEIYQRIQAEKVPGQSGF</sequence>
<keyword id="KW-0010">Activator</keyword>
<keyword id="KW-0963">Cytoplasm</keyword>
<keyword id="KW-1185">Reference proteome</keyword>
<keyword id="KW-0678">Repressor</keyword>
<keyword id="KW-0694">RNA-binding</keyword>
<keyword id="KW-0810">Translation regulation</keyword>
<gene>
    <name evidence="1" type="primary">csrA</name>
    <name type="ordered locus">AHA_3712</name>
</gene>
<dbReference type="EMBL" id="CP000462">
    <property type="protein sequence ID" value="ABK38785.1"/>
    <property type="molecule type" value="Genomic_DNA"/>
</dbReference>
<dbReference type="RefSeq" id="WP_005305164.1">
    <property type="nucleotide sequence ID" value="NC_008570.1"/>
</dbReference>
<dbReference type="RefSeq" id="YP_858160.1">
    <property type="nucleotide sequence ID" value="NC_008570.1"/>
</dbReference>
<dbReference type="SMR" id="A0KPF9"/>
<dbReference type="STRING" id="380703.AHA_3712"/>
<dbReference type="EnsemblBacteria" id="ABK38785">
    <property type="protein sequence ID" value="ABK38785"/>
    <property type="gene ID" value="AHA_3712"/>
</dbReference>
<dbReference type="GeneID" id="69552220"/>
<dbReference type="KEGG" id="aha:AHA_3712"/>
<dbReference type="PATRIC" id="fig|380703.7.peg.3685"/>
<dbReference type="eggNOG" id="COG1551">
    <property type="taxonomic scope" value="Bacteria"/>
</dbReference>
<dbReference type="HOGENOM" id="CLU_164837_2_1_6"/>
<dbReference type="OrthoDB" id="9809061at2"/>
<dbReference type="PRO" id="PR:A0KPF9"/>
<dbReference type="Proteomes" id="UP000000756">
    <property type="component" value="Chromosome"/>
</dbReference>
<dbReference type="GO" id="GO:0005829">
    <property type="term" value="C:cytosol"/>
    <property type="evidence" value="ECO:0007669"/>
    <property type="project" value="TreeGrafter"/>
</dbReference>
<dbReference type="GO" id="GO:0048027">
    <property type="term" value="F:mRNA 5'-UTR binding"/>
    <property type="evidence" value="ECO:0007669"/>
    <property type="project" value="UniProtKB-UniRule"/>
</dbReference>
<dbReference type="GO" id="GO:0006402">
    <property type="term" value="P:mRNA catabolic process"/>
    <property type="evidence" value="ECO:0007669"/>
    <property type="project" value="InterPro"/>
</dbReference>
<dbReference type="GO" id="GO:0045947">
    <property type="term" value="P:negative regulation of translational initiation"/>
    <property type="evidence" value="ECO:0007669"/>
    <property type="project" value="UniProtKB-UniRule"/>
</dbReference>
<dbReference type="GO" id="GO:0045948">
    <property type="term" value="P:positive regulation of translational initiation"/>
    <property type="evidence" value="ECO:0007669"/>
    <property type="project" value="UniProtKB-UniRule"/>
</dbReference>
<dbReference type="GO" id="GO:0006109">
    <property type="term" value="P:regulation of carbohydrate metabolic process"/>
    <property type="evidence" value="ECO:0007669"/>
    <property type="project" value="UniProtKB-UniRule"/>
</dbReference>
<dbReference type="FunFam" id="2.60.40.4380:FF:000001">
    <property type="entry name" value="Translational regulator CsrA"/>
    <property type="match status" value="1"/>
</dbReference>
<dbReference type="Gene3D" id="2.60.40.4380">
    <property type="entry name" value="Translational regulator CsrA"/>
    <property type="match status" value="1"/>
</dbReference>
<dbReference type="HAMAP" id="MF_00167">
    <property type="entry name" value="CsrA"/>
    <property type="match status" value="1"/>
</dbReference>
<dbReference type="InterPro" id="IPR003751">
    <property type="entry name" value="CsrA"/>
</dbReference>
<dbReference type="InterPro" id="IPR036107">
    <property type="entry name" value="CsrA_sf"/>
</dbReference>
<dbReference type="NCBIfam" id="TIGR00202">
    <property type="entry name" value="csrA"/>
    <property type="match status" value="1"/>
</dbReference>
<dbReference type="NCBIfam" id="NF002469">
    <property type="entry name" value="PRK01712.1"/>
    <property type="match status" value="1"/>
</dbReference>
<dbReference type="PANTHER" id="PTHR34984">
    <property type="entry name" value="CARBON STORAGE REGULATOR"/>
    <property type="match status" value="1"/>
</dbReference>
<dbReference type="PANTHER" id="PTHR34984:SF1">
    <property type="entry name" value="CARBON STORAGE REGULATOR"/>
    <property type="match status" value="1"/>
</dbReference>
<dbReference type="Pfam" id="PF02599">
    <property type="entry name" value="CsrA"/>
    <property type="match status" value="1"/>
</dbReference>
<dbReference type="SUPFAM" id="SSF117130">
    <property type="entry name" value="CsrA-like"/>
    <property type="match status" value="1"/>
</dbReference>
<evidence type="ECO:0000255" key="1">
    <source>
        <dbReference type="HAMAP-Rule" id="MF_00167"/>
    </source>
</evidence>
<name>CSRA_AERHH</name>
<organism>
    <name type="scientific">Aeromonas hydrophila subsp. hydrophila (strain ATCC 7966 / DSM 30187 / BCRC 13018 / CCUG 14551 / JCM 1027 / KCTC 2358 / NCIMB 9240 / NCTC 8049)</name>
    <dbReference type="NCBI Taxonomy" id="380703"/>
    <lineage>
        <taxon>Bacteria</taxon>
        <taxon>Pseudomonadati</taxon>
        <taxon>Pseudomonadota</taxon>
        <taxon>Gammaproteobacteria</taxon>
        <taxon>Aeromonadales</taxon>
        <taxon>Aeromonadaceae</taxon>
        <taxon>Aeromonas</taxon>
    </lineage>
</organism>